<accession>B0B815</accession>
<accession>P18586</accession>
<accession>P21354</accession>
<dbReference type="EMBL" id="M23001">
    <property type="protein sequence ID" value="AAA23152.1"/>
    <property type="molecule type" value="Genomic_DNA"/>
</dbReference>
<dbReference type="EMBL" id="AM884176">
    <property type="protein sequence ID" value="CAP04141.1"/>
    <property type="status" value="ALT_INIT"/>
    <property type="molecule type" value="Genomic_DNA"/>
</dbReference>
<dbReference type="PIR" id="A32244">
    <property type="entry name" value="A32244"/>
</dbReference>
<dbReference type="RefSeq" id="WP_013984953.1">
    <property type="nucleotide sequence ID" value="NC_010287.1"/>
</dbReference>
<dbReference type="RefSeq" id="YP_001654774.1">
    <property type="nucleotide sequence ID" value="NC_010287.1"/>
</dbReference>
<dbReference type="SMR" id="B0B815"/>
<dbReference type="TCDB" id="1.B.2.1.2">
    <property type="family name" value="the chlamydial porin (cp) family"/>
</dbReference>
<dbReference type="KEGG" id="ctb:CTL0702"/>
<dbReference type="PATRIC" id="fig|471472.4.peg.754"/>
<dbReference type="HOGENOM" id="CLU_029611_0_0_0"/>
<dbReference type="Proteomes" id="UP001154402">
    <property type="component" value="Chromosome"/>
</dbReference>
<dbReference type="GO" id="GO:0042597">
    <property type="term" value="C:periplasmic space"/>
    <property type="evidence" value="ECO:0007669"/>
    <property type="project" value="UniProtKB-SubCell"/>
</dbReference>
<dbReference type="GO" id="GO:0005201">
    <property type="term" value="F:extracellular matrix structural constituent"/>
    <property type="evidence" value="ECO:0007669"/>
    <property type="project" value="InterPro"/>
</dbReference>
<dbReference type="GO" id="GO:0008360">
    <property type="term" value="P:regulation of cell shape"/>
    <property type="evidence" value="ECO:0007669"/>
    <property type="project" value="UniProtKB-KW"/>
</dbReference>
<dbReference type="Gene3D" id="2.60.40.10">
    <property type="entry name" value="Immunoglobulins"/>
    <property type="match status" value="1"/>
</dbReference>
<dbReference type="InterPro" id="IPR003506">
    <property type="entry name" value="Chlam_OMP6"/>
</dbReference>
<dbReference type="InterPro" id="IPR051172">
    <property type="entry name" value="Chlamydia_OmcB"/>
</dbReference>
<dbReference type="InterPro" id="IPR013783">
    <property type="entry name" value="Ig-like_fold"/>
</dbReference>
<dbReference type="InterPro" id="IPR001434">
    <property type="entry name" value="OmcB-like_DUF11"/>
</dbReference>
<dbReference type="PANTHER" id="PTHR34819">
    <property type="entry name" value="LARGE CYSTEINE-RICH PERIPLASMIC PROTEIN OMCB"/>
    <property type="match status" value="1"/>
</dbReference>
<dbReference type="PANTHER" id="PTHR34819:SF4">
    <property type="entry name" value="LARGE CYSTEINE-RICH PERIPLASMIC PROTEIN OMCB"/>
    <property type="match status" value="1"/>
</dbReference>
<dbReference type="Pfam" id="PF03504">
    <property type="entry name" value="Chlam_OMP6"/>
    <property type="match status" value="1"/>
</dbReference>
<dbReference type="Pfam" id="PF01345">
    <property type="entry name" value="DUF11"/>
    <property type="match status" value="3"/>
</dbReference>
<dbReference type="PRINTS" id="PR01336">
    <property type="entry name" value="CHLAMIDIAOM6"/>
</dbReference>
<proteinExistence type="evidence at protein level"/>
<reference key="1">
    <citation type="journal article" date="1989" name="J. Bacteriol.">
        <title>Identification by sequence analysis of two-site posttranslational processing of the cysteine-rich outer membrane protein 2 of Chlamydia trachomatis serovar L2.</title>
        <authorList>
            <person name="Allen J.E."/>
            <person name="Stephens R.S."/>
        </authorList>
    </citation>
    <scope>NUCLEOTIDE SEQUENCE [GENOMIC DNA]</scope>
    <scope>PROTEIN SEQUENCE OF 23-32 AND 41-51</scope>
    <scope>DEVELOPMENTAL STAGE</scope>
    <scope>EXISTENCE OF TWO MATURE FORMS</scope>
    <source>
        <strain>ATCC VR-902B / DSM 19102 / 434/Bu</strain>
    </source>
</reference>
<reference key="2">
    <citation type="journal article" date="2008" name="Genome Res.">
        <title>Chlamydia trachomatis: genome sequence analysis of lymphogranuloma venereum isolates.</title>
        <authorList>
            <person name="Thomson N.R."/>
            <person name="Holden M.T.G."/>
            <person name="Carder C."/>
            <person name="Lennard N."/>
            <person name="Lockey S.J."/>
            <person name="Marsh P."/>
            <person name="Skipp P."/>
            <person name="O'Connor C.D."/>
            <person name="Goodhead I."/>
            <person name="Norbertzcak H."/>
            <person name="Harris B."/>
            <person name="Ormond D."/>
            <person name="Rance R."/>
            <person name="Quail M.A."/>
            <person name="Parkhill J."/>
            <person name="Stephens R.S."/>
            <person name="Clarke I.N."/>
        </authorList>
    </citation>
    <scope>NUCLEOTIDE SEQUENCE [LARGE SCALE GENOMIC DNA]</scope>
    <source>
        <strain>ATCC VR-902B / DSM 19102 / 434/Bu</strain>
    </source>
</reference>
<feature type="signal peptide" evidence="2">
    <location>
        <begin position="1"/>
        <end position="22"/>
    </location>
</feature>
<feature type="chain" id="PRO_0000417577" description="Large cysteine-rich periplasmic protein OmcB, isoform 1">
    <location>
        <begin position="23"/>
        <end position="547"/>
    </location>
</feature>
<feature type="chain" id="PRO_0000417578" description="Large cysteine-rich periplasmic protein OmcB, isoform 2">
    <location>
        <begin position="41"/>
        <end position="547"/>
    </location>
</feature>
<feature type="region of interest" description="Disordered" evidence="1">
    <location>
        <begin position="45"/>
        <end position="84"/>
    </location>
</feature>
<feature type="compositionally biased region" description="Basic residues" evidence="1">
    <location>
        <begin position="52"/>
        <end position="61"/>
    </location>
</feature>
<sequence>MNKLIRRAVTIFAVTSVASLFASGVLETSMAEFISTNVISLADTKAKDNTSHKSKKARKNHSKETPVNRKKVAPVHESKATGPKQDSCFGRMYTVKVNDDRNVEITQAVPKYATVGSPYPVEITATGKRDCVDVIITQQLPCEAEFVRSDPATTPTADGKLVWKIDRLGQGEKSKITVWVKPLKEGCCFTAATVCACPEIRSVTKCGQPAICVKQEGPENACLRCPVVYKINVVNQGTATARNVVVENPVPDSYAHSSGQRVLTFTLGDMQPGEHRTITVEFCPLKRGRATNIAMVSYCGGHKNTASVTTVINEPCVQVSIAGADWSYVCKPVEYVISVSNPGDLVLRDVVVKDTLSPGVTVLEAAGAQISCNKVVWTVKELNPGESLQYKVLVRAQTPGQFTNNVVVKSCSDCGTCTSCAEATTYWKGVAATHMCVVDTCDPVCVGENTVYRICVTNRGSAEDTNVSLMLKFSKELQPVSFSGPTKGTITGNTVVFDSLPRLGSKETVEFSVTLKAVSAGDARGEAILSSDTLTVPVSDTENTHIY</sequence>
<protein>
    <recommendedName>
        <fullName>Large cysteine-rich periplasmic protein OmcB</fullName>
        <shortName>Large-CRP</shortName>
    </recommendedName>
    <alternativeName>
        <fullName>60 kDa CRP</fullName>
    </alternativeName>
    <alternativeName>
        <fullName>60 kDa outer membrane protein</fullName>
    </alternativeName>
    <alternativeName>
        <fullName>Cysteine-rich outer membrane protein</fullName>
    </alternativeName>
    <component>
        <recommendedName>
            <fullName>Large cysteine-rich periplasmic protein OmcB, isoform 1</fullName>
        </recommendedName>
    </component>
    <component>
        <recommendedName>
            <fullName>Large cysteine-rich periplasmic protein OmcB, isoform 2</fullName>
        </recommendedName>
    </component>
</protein>
<keyword id="KW-0133">Cell shape</keyword>
<keyword id="KW-0903">Direct protein sequencing</keyword>
<keyword id="KW-1015">Disulfide bond</keyword>
<keyword id="KW-0574">Periplasm</keyword>
<keyword id="KW-0732">Signal</keyword>
<comment type="function">
    <text>In elementary bodies (EBs, the infectious stage, which is able to survive outside the host cell) provides the structural integrity of the outer envelope through disulfide cross-links with the small cysteine-rich protein and the major outer membrane protein. It has been described in publications as the Sarkosyl-insoluble COMC (Chlamydia outer membrane complex), and serves as the functional equivalent of peptidoglycan.</text>
</comment>
<comment type="subunit">
    <text>Part of a disulfide cross-linked outer membrane complex (COMC) composed of the major outer membrane porin (MOMP), the small cysteine-rich protein (OmcA) and the large cysteine-rich periplasmic protein (OmcB).</text>
</comment>
<comment type="subcellular location">
    <subcellularLocation>
        <location evidence="3">Periplasm</location>
    </subcellularLocation>
</comment>
<comment type="developmental stage">
    <text evidence="2">It is present but the disulfide bonds are reduced in the intracellular reticulate bodies (RBs).</text>
</comment>
<comment type="miscellaneous">
    <text>In strain L2 the origin of the observed doublet has been shown to be different post-translational cleavage.</text>
</comment>
<comment type="caution">
    <text evidence="3">Was thought to be an outer membrane protein as it is part of a disulfide cross-linked complex that is insoluble in the detergent Sarkosyl; however based on experiments in C.psittaci it is likely to be periplasmic.</text>
</comment>
<comment type="sequence caution" evidence="3">
    <conflict type="erroneous initiation">
        <sequence resource="EMBL-CDS" id="CAP04141"/>
    </conflict>
    <text>Extended N-terminus.</text>
</comment>
<organism>
    <name type="scientific">Chlamydia trachomatis serovar L2 (strain ATCC VR-902B / DSM 19102 / 434/Bu)</name>
    <dbReference type="NCBI Taxonomy" id="471472"/>
    <lineage>
        <taxon>Bacteria</taxon>
        <taxon>Pseudomonadati</taxon>
        <taxon>Chlamydiota</taxon>
        <taxon>Chlamydiia</taxon>
        <taxon>Chlamydiales</taxon>
        <taxon>Chlamydiaceae</taxon>
        <taxon>Chlamydia/Chlamydophila group</taxon>
        <taxon>Chlamydia</taxon>
    </lineage>
</organism>
<gene>
    <name type="primary">omcB</name>
    <name type="synonym">omp2</name>
    <name type="synonym">omp2B</name>
    <name type="ordered locus">CTL0702</name>
</gene>
<evidence type="ECO:0000256" key="1">
    <source>
        <dbReference type="SAM" id="MobiDB-lite"/>
    </source>
</evidence>
<evidence type="ECO:0000269" key="2">
    <source>
    </source>
</evidence>
<evidence type="ECO:0000305" key="3"/>
<name>OMCB_CHLT2</name>